<evidence type="ECO:0000255" key="1"/>
<evidence type="ECO:0000305" key="2"/>
<evidence type="ECO:0007829" key="3">
    <source>
        <dbReference type="PDB" id="2FPN"/>
    </source>
</evidence>
<gene>
    <name type="primary">ywmB</name>
    <name type="ordered locus">BSU36770</name>
</gene>
<proteinExistence type="evidence at protein level"/>
<accession>O32277</accession>
<accession>P70959</accession>
<feature type="signal peptide" evidence="1">
    <location>
        <begin position="1"/>
        <end position="30"/>
    </location>
</feature>
<feature type="chain" id="PRO_0000359926" description="Uncharacterized protein YwmB">
    <location>
        <begin position="31"/>
        <end position="246"/>
    </location>
</feature>
<feature type="sequence conflict" description="In Ref. 1; CAB03678." evidence="2" ref="1">
    <original>KA</original>
    <variation>S</variation>
    <location>
        <begin position="176"/>
        <end position="177"/>
    </location>
</feature>
<feature type="helix" evidence="3">
    <location>
        <begin position="33"/>
        <end position="43"/>
    </location>
</feature>
<feature type="strand" evidence="3">
    <location>
        <begin position="46"/>
        <end position="59"/>
    </location>
</feature>
<feature type="helix" evidence="3">
    <location>
        <begin position="63"/>
        <end position="76"/>
    </location>
</feature>
<feature type="strand" evidence="3">
    <location>
        <begin position="81"/>
        <end position="85"/>
    </location>
</feature>
<feature type="strand" evidence="3">
    <location>
        <begin position="88"/>
        <end position="99"/>
    </location>
</feature>
<feature type="turn" evidence="3">
    <location>
        <begin position="100"/>
        <end position="103"/>
    </location>
</feature>
<feature type="strand" evidence="3">
    <location>
        <begin position="104"/>
        <end position="115"/>
    </location>
</feature>
<feature type="strand" evidence="3">
    <location>
        <begin position="121"/>
        <end position="131"/>
    </location>
</feature>
<feature type="helix" evidence="3">
    <location>
        <begin position="136"/>
        <end position="151"/>
    </location>
</feature>
<feature type="strand" evidence="3">
    <location>
        <begin position="157"/>
        <end position="165"/>
    </location>
</feature>
<feature type="helix" evidence="3">
    <location>
        <begin position="169"/>
        <end position="184"/>
    </location>
</feature>
<feature type="strand" evidence="3">
    <location>
        <begin position="197"/>
        <end position="202"/>
    </location>
</feature>
<feature type="strand" evidence="3">
    <location>
        <begin position="211"/>
        <end position="213"/>
    </location>
</feature>
<feature type="strand" evidence="3">
    <location>
        <begin position="216"/>
        <end position="218"/>
    </location>
</feature>
<feature type="strand" evidence="3">
    <location>
        <begin position="220"/>
        <end position="225"/>
    </location>
</feature>
<feature type="strand" evidence="3">
    <location>
        <begin position="234"/>
        <end position="240"/>
    </location>
</feature>
<name>YWMB_BACSU</name>
<dbReference type="EMBL" id="Z81356">
    <property type="protein sequence ID" value="CAB03678.1"/>
    <property type="molecule type" value="Genomic_DNA"/>
</dbReference>
<dbReference type="EMBL" id="AL009126">
    <property type="protein sequence ID" value="CAB15694.1"/>
    <property type="molecule type" value="Genomic_DNA"/>
</dbReference>
<dbReference type="PIR" id="F70062">
    <property type="entry name" value="F70062"/>
</dbReference>
<dbReference type="RefSeq" id="NP_391558.1">
    <property type="nucleotide sequence ID" value="NC_000964.3"/>
</dbReference>
<dbReference type="RefSeq" id="WP_003244344.1">
    <property type="nucleotide sequence ID" value="NZ_OZ025638.1"/>
</dbReference>
<dbReference type="PDB" id="2FPN">
    <property type="method" value="X-ray"/>
    <property type="resolution" value="2.49 A"/>
    <property type="chains" value="A=31-246"/>
</dbReference>
<dbReference type="PDBsum" id="2FPN"/>
<dbReference type="SMR" id="O32277"/>
<dbReference type="FunCoup" id="O32277">
    <property type="interactions" value="39"/>
</dbReference>
<dbReference type="STRING" id="224308.BSU36770"/>
<dbReference type="PaxDb" id="224308-BSU36770"/>
<dbReference type="DNASU" id="936983"/>
<dbReference type="EnsemblBacteria" id="CAB15694">
    <property type="protein sequence ID" value="CAB15694"/>
    <property type="gene ID" value="BSU_36770"/>
</dbReference>
<dbReference type="GeneID" id="936983"/>
<dbReference type="KEGG" id="bsu:BSU36770"/>
<dbReference type="PATRIC" id="fig|224308.179.peg.3983"/>
<dbReference type="eggNOG" id="ENOG5033GA6">
    <property type="taxonomic scope" value="Bacteria"/>
</dbReference>
<dbReference type="InParanoid" id="O32277"/>
<dbReference type="OrthoDB" id="2374820at2"/>
<dbReference type="BioCyc" id="BSUB:BSU36770-MONOMER"/>
<dbReference type="EvolutionaryTrace" id="O32277"/>
<dbReference type="Proteomes" id="UP000001570">
    <property type="component" value="Chromosome"/>
</dbReference>
<dbReference type="Gene3D" id="3.30.2030.10">
    <property type="entry name" value="YwmB-like"/>
    <property type="match status" value="1"/>
</dbReference>
<dbReference type="Gene3D" id="3.30.360.40">
    <property type="entry name" value="YwmB-like"/>
    <property type="match status" value="1"/>
</dbReference>
<dbReference type="InterPro" id="IPR014794">
    <property type="entry name" value="DUF1779"/>
</dbReference>
<dbReference type="InterPro" id="IPR036209">
    <property type="entry name" value="YwmB-like_sf"/>
</dbReference>
<dbReference type="Pfam" id="PF08680">
    <property type="entry name" value="DUF1779"/>
    <property type="match status" value="1"/>
</dbReference>
<dbReference type="SUPFAM" id="SSF143842">
    <property type="entry name" value="YwmB-like"/>
    <property type="match status" value="1"/>
</dbReference>
<sequence>MKKKQVSHAIIISVMLSFVIAVFHTIHASELTPLAQMAEGMERQDVSIDKWTLHAKQNLSLTEKEFYQKVQRLKQEYRQYDWVIAREDKMIKAIGTYTDKKNRTSFRLQLVTTLKKHNPTSYLLYEQMSLETPDSWNDTYEQFERETLGIFQEKVVIFTCLNGHLDDNMNIVLQKKANQLLNEFQARSVEHVVEPNFVSISAFTDEWEEYIMTSKHKMNLQIALRSAGMGGKHTVTVGTPIVTTEY</sequence>
<protein>
    <recommendedName>
        <fullName>Uncharacterized protein YwmB</fullName>
    </recommendedName>
</protein>
<keyword id="KW-0002">3D-structure</keyword>
<keyword id="KW-1185">Reference proteome</keyword>
<keyword id="KW-0732">Signal</keyword>
<reference key="1">
    <citation type="submission" date="1996-10" db="EMBL/GenBank/DDBJ databases">
        <title>Bacillus subtilis atpC to ureA chromosomal region.</title>
        <authorList>
            <person name="Glaser P."/>
            <person name="Danchin A."/>
            <person name="Kunst F."/>
            <person name="Moszer I."/>
        </authorList>
    </citation>
    <scope>NUCLEOTIDE SEQUENCE [GENOMIC DNA]</scope>
    <source>
        <strain>168</strain>
    </source>
</reference>
<reference key="2">
    <citation type="journal article" date="1997" name="Nature">
        <title>The complete genome sequence of the Gram-positive bacterium Bacillus subtilis.</title>
        <authorList>
            <person name="Kunst F."/>
            <person name="Ogasawara N."/>
            <person name="Moszer I."/>
            <person name="Albertini A.M."/>
            <person name="Alloni G."/>
            <person name="Azevedo V."/>
            <person name="Bertero M.G."/>
            <person name="Bessieres P."/>
            <person name="Bolotin A."/>
            <person name="Borchert S."/>
            <person name="Borriss R."/>
            <person name="Boursier L."/>
            <person name="Brans A."/>
            <person name="Braun M."/>
            <person name="Brignell S.C."/>
            <person name="Bron S."/>
            <person name="Brouillet S."/>
            <person name="Bruschi C.V."/>
            <person name="Caldwell B."/>
            <person name="Capuano V."/>
            <person name="Carter N.M."/>
            <person name="Choi S.-K."/>
            <person name="Codani J.-J."/>
            <person name="Connerton I.F."/>
            <person name="Cummings N.J."/>
            <person name="Daniel R.A."/>
            <person name="Denizot F."/>
            <person name="Devine K.M."/>
            <person name="Duesterhoeft A."/>
            <person name="Ehrlich S.D."/>
            <person name="Emmerson P.T."/>
            <person name="Entian K.-D."/>
            <person name="Errington J."/>
            <person name="Fabret C."/>
            <person name="Ferrari E."/>
            <person name="Foulger D."/>
            <person name="Fritz C."/>
            <person name="Fujita M."/>
            <person name="Fujita Y."/>
            <person name="Fuma S."/>
            <person name="Galizzi A."/>
            <person name="Galleron N."/>
            <person name="Ghim S.-Y."/>
            <person name="Glaser P."/>
            <person name="Goffeau A."/>
            <person name="Golightly E.J."/>
            <person name="Grandi G."/>
            <person name="Guiseppi G."/>
            <person name="Guy B.J."/>
            <person name="Haga K."/>
            <person name="Haiech J."/>
            <person name="Harwood C.R."/>
            <person name="Henaut A."/>
            <person name="Hilbert H."/>
            <person name="Holsappel S."/>
            <person name="Hosono S."/>
            <person name="Hullo M.-F."/>
            <person name="Itaya M."/>
            <person name="Jones L.-M."/>
            <person name="Joris B."/>
            <person name="Karamata D."/>
            <person name="Kasahara Y."/>
            <person name="Klaerr-Blanchard M."/>
            <person name="Klein C."/>
            <person name="Kobayashi Y."/>
            <person name="Koetter P."/>
            <person name="Koningstein G."/>
            <person name="Krogh S."/>
            <person name="Kumano M."/>
            <person name="Kurita K."/>
            <person name="Lapidus A."/>
            <person name="Lardinois S."/>
            <person name="Lauber J."/>
            <person name="Lazarevic V."/>
            <person name="Lee S.-M."/>
            <person name="Levine A."/>
            <person name="Liu H."/>
            <person name="Masuda S."/>
            <person name="Mauel C."/>
            <person name="Medigue C."/>
            <person name="Medina N."/>
            <person name="Mellado R.P."/>
            <person name="Mizuno M."/>
            <person name="Moestl D."/>
            <person name="Nakai S."/>
            <person name="Noback M."/>
            <person name="Noone D."/>
            <person name="O'Reilly M."/>
            <person name="Ogawa K."/>
            <person name="Ogiwara A."/>
            <person name="Oudega B."/>
            <person name="Park S.-H."/>
            <person name="Parro V."/>
            <person name="Pohl T.M."/>
            <person name="Portetelle D."/>
            <person name="Porwollik S."/>
            <person name="Prescott A.M."/>
            <person name="Presecan E."/>
            <person name="Pujic P."/>
            <person name="Purnelle B."/>
            <person name="Rapoport G."/>
            <person name="Rey M."/>
            <person name="Reynolds S."/>
            <person name="Rieger M."/>
            <person name="Rivolta C."/>
            <person name="Rocha E."/>
            <person name="Roche B."/>
            <person name="Rose M."/>
            <person name="Sadaie Y."/>
            <person name="Sato T."/>
            <person name="Scanlan E."/>
            <person name="Schleich S."/>
            <person name="Schroeter R."/>
            <person name="Scoffone F."/>
            <person name="Sekiguchi J."/>
            <person name="Sekowska A."/>
            <person name="Seror S.J."/>
            <person name="Serror P."/>
            <person name="Shin B.-S."/>
            <person name="Soldo B."/>
            <person name="Sorokin A."/>
            <person name="Tacconi E."/>
            <person name="Takagi T."/>
            <person name="Takahashi H."/>
            <person name="Takemaru K."/>
            <person name="Takeuchi M."/>
            <person name="Tamakoshi A."/>
            <person name="Tanaka T."/>
            <person name="Terpstra P."/>
            <person name="Tognoni A."/>
            <person name="Tosato V."/>
            <person name="Uchiyama S."/>
            <person name="Vandenbol M."/>
            <person name="Vannier F."/>
            <person name="Vassarotti A."/>
            <person name="Viari A."/>
            <person name="Wambutt R."/>
            <person name="Wedler E."/>
            <person name="Wedler H."/>
            <person name="Weitzenegger T."/>
            <person name="Winters P."/>
            <person name="Wipat A."/>
            <person name="Yamamoto H."/>
            <person name="Yamane K."/>
            <person name="Yasumoto K."/>
            <person name="Yata K."/>
            <person name="Yoshida K."/>
            <person name="Yoshikawa H.-F."/>
            <person name="Zumstein E."/>
            <person name="Yoshikawa H."/>
            <person name="Danchin A."/>
        </authorList>
    </citation>
    <scope>NUCLEOTIDE SEQUENCE [LARGE SCALE GENOMIC DNA]</scope>
    <source>
        <strain>168</strain>
    </source>
</reference>
<reference key="3">
    <citation type="submission" date="2006-03" db="PDB data bank">
        <title>The crystal structure of the ywmB protein from Bacillus subtilis.</title>
        <authorList>
            <consortium name="Midwest center for structural genomics (MCSG)"/>
        </authorList>
    </citation>
    <scope>X-RAY CRYSTALLOGRAPHY (2.49 ANGSTROMS) OF 31-246</scope>
</reference>
<organism>
    <name type="scientific">Bacillus subtilis (strain 168)</name>
    <dbReference type="NCBI Taxonomy" id="224308"/>
    <lineage>
        <taxon>Bacteria</taxon>
        <taxon>Bacillati</taxon>
        <taxon>Bacillota</taxon>
        <taxon>Bacilli</taxon>
        <taxon>Bacillales</taxon>
        <taxon>Bacillaceae</taxon>
        <taxon>Bacillus</taxon>
    </lineage>
</organism>